<reference key="1">
    <citation type="journal article" date="2003" name="J. Bacteriol.">
        <title>Characterization of a spontaneous nonmagnetic mutant of Magnetospirillum gryphiswaldense reveals a large deletion comprising a putative magnetosome island.</title>
        <authorList>
            <person name="Schuebbe S."/>
            <person name="Kube M."/>
            <person name="Scheffel A."/>
            <person name="Wawer C."/>
            <person name="Heyen U."/>
            <person name="Meyerdierks A."/>
            <person name="Madkour M.H."/>
            <person name="Mayer F."/>
            <person name="Reinhardt R."/>
            <person name="Schueler D."/>
        </authorList>
    </citation>
    <scope>NUCLEOTIDE SEQUENCE [GENOMIC DNA]</scope>
    <scope>PROBABLE OPERON</scope>
    <scope>DISRUPTION PHENOTYPE</scope>
    <source>
        <strain>DSM 6361 / JCM 21280 / NBRC 15271 / MSR-1</strain>
    </source>
</reference>
<reference key="2">
    <citation type="journal article" date="2014" name="Genome Announc.">
        <title>Complete genome sequence of Magnetospirillum gryphiswaldense MSR-1.</title>
        <authorList>
            <person name="Wang X."/>
            <person name="Wang Q."/>
            <person name="Zhang W."/>
            <person name="Wang Y."/>
            <person name="Li L."/>
            <person name="Wen T."/>
            <person name="Zhang T."/>
            <person name="Zhang Y."/>
            <person name="Xu J."/>
            <person name="Hu J."/>
            <person name="Li S."/>
            <person name="Liu L."/>
            <person name="Liu J."/>
            <person name="Jiang W."/>
            <person name="Tian J."/>
            <person name="Li Y."/>
            <person name="Schuler D."/>
            <person name="Wang L."/>
            <person name="Li J."/>
        </authorList>
    </citation>
    <scope>NUCLEOTIDE SEQUENCE [LARGE SCALE GENOMIC DNA]</scope>
    <source>
        <strain>DSM 6361 / JCM 21280 / NBRC 15271 / MSR-1</strain>
    </source>
</reference>
<reference key="3">
    <citation type="journal article" date="2011" name="PLoS ONE">
        <title>Functional analysis of the magnetosome island in Magnetospirillum gryphiswaldense: the mamAB operon is sufficient for magnetite biomineralization.</title>
        <authorList>
            <person name="Lohsse A."/>
            <person name="Ullrich S."/>
            <person name="Katzmann E."/>
            <person name="Borg S."/>
            <person name="Wanner G."/>
            <person name="Richter M."/>
            <person name="Voigt B."/>
            <person name="Schweder T."/>
            <person name="Schueler D."/>
        </authorList>
    </citation>
    <scope>MINIMAL MAGNETOSOME ISLAND</scope>
    <source>
        <strain>DSM 6361 / JCM 21280 / NBRC 15271 / MSR-1</strain>
    </source>
</reference>
<reference key="4">
    <citation type="journal article" date="2014" name="J. Bacteriol.">
        <title>Genetic dissection of the mamAB and mms6 operons reveals a gene set essential for magnetosome biogenesis in Magnetospirillum gryphiswaldense.</title>
        <authorList>
            <person name="Lohsse A."/>
            <person name="Borg S."/>
            <person name="Raschdorf O."/>
            <person name="Kolinko I."/>
            <person name="Tompa E."/>
            <person name="Posfai M."/>
            <person name="Faivre D."/>
            <person name="Baumgartner J."/>
            <person name="Schueler D."/>
        </authorList>
    </citation>
    <scope>DISRUPTION PHENOTYPE</scope>
    <source>
        <strain>DSM 6361 / JCM 21280 / NBRC 15271 / MSR-1</strain>
    </source>
</reference>
<name>MAMU_MAGGM</name>
<feature type="chain" id="PRO_0000447771" description="Putative lipid kinase MamU">
    <location>
        <begin position="1"/>
        <end position="297"/>
    </location>
</feature>
<feature type="domain" description="DAGKc" evidence="3">
    <location>
        <begin position="43"/>
        <end position="131"/>
    </location>
</feature>
<feature type="active site" description="Proton acceptor" evidence="1">
    <location>
        <position position="274"/>
    </location>
</feature>
<feature type="binding site" evidence="1">
    <location>
        <begin position="68"/>
        <end position="74"/>
    </location>
    <ligand>
        <name>ATP</name>
        <dbReference type="ChEBI" id="CHEBI:30616"/>
    </ligand>
</feature>
<protein>
    <recommendedName>
        <fullName evidence="8">Putative lipid kinase MamU</fullName>
        <ecNumber evidence="3">2.7.-.-</ecNumber>
    </recommendedName>
</protein>
<organism>
    <name type="scientific">Magnetospirillum gryphiswaldense (strain DSM 6361 / JCM 21280 / NBRC 15271 / MSR-1)</name>
    <dbReference type="NCBI Taxonomy" id="431944"/>
    <lineage>
        <taxon>Bacteria</taxon>
        <taxon>Pseudomonadati</taxon>
        <taxon>Pseudomonadota</taxon>
        <taxon>Alphaproteobacteria</taxon>
        <taxon>Rhodospirillales</taxon>
        <taxon>Rhodospirillaceae</taxon>
        <taxon>Magnetospirillum</taxon>
    </lineage>
</organism>
<comment type="function">
    <text evidence="1">Might phosphorylate lipids.</text>
</comment>
<comment type="subcellular location">
    <subcellularLocation>
        <location evidence="2">Cytoplasm</location>
    </subcellularLocation>
</comment>
<comment type="induction">
    <text evidence="9">The last gene in the probable 17 gene mamAB operon.</text>
</comment>
<comment type="disruption phenotype">
    <text evidence="4 6">Normal magnetic response, normal magnetosomes (PubMed:24816605). Deletion of approximately 80 kb of DNA, including this operon, leads to cells that are non-magnetic, lack internal membrane systems, grow poorly, have reduced mobility and take-up and accumulate iron poorly (PubMed:13129949).</text>
</comment>
<comment type="miscellaneous">
    <text evidence="9">This bacteria makes up to 60 cubo-octahedral magnetosomes of about 45 nm in diameter which contain membrane-bound crystals of magnetite (Fe(3)O(4)).</text>
</comment>
<comment type="miscellaneous">
    <text evidence="5">Expression of just the minimal mamAB gene cluster (MGMSRv2__2365 to MGMSRv2__2381), including this gene, is sufficient to form a minimal magnetosome chain with small magnetite particles.</text>
</comment>
<comment type="similarity">
    <text evidence="8">Belongs to the diacylglycerol/lipid kinase family.</text>
</comment>
<comment type="sequence caution" evidence="8">
    <conflict type="erroneous initiation">
        <sequence resource="EMBL-CDS" id="CDK99580"/>
    </conflict>
    <text>Truncated N-terminus.</text>
</comment>
<gene>
    <name evidence="7" type="primary">mamU</name>
    <name type="ordered locus">MGMSRv2__2365</name>
</gene>
<accession>Q6NE47</accession>
<accession>V6F225</accession>
<sequence length="297" mass="31995">MRIAAIINARAGTVLRMSPSAVTERLSVVWGSLGHDAAIILAEGKDMGRMVRKACRDPDIRAIIIGGGDGSLSRALEHVLASGKSLGVLPLGTMNYMARQIGMPLDLAQAAVALAGAVQTPMDVGRVNDRYFLIRACFGAFPEFIQSRDRVRRKGGSFLEGALAGLSGVARRYRIVEAELSSPGGRARIATSFLMISNNLCRDSDPFLLERERMDGGSLGVYVGRSAGPVGLMELGLQAAMGRWASNEALFQGEMHWLEVQTEQRKPLISIDGEVEKMEGPFRFDILPGALSILVPK</sequence>
<keyword id="KW-0067">ATP-binding</keyword>
<keyword id="KW-0963">Cytoplasm</keyword>
<keyword id="KW-0418">Kinase</keyword>
<keyword id="KW-0444">Lipid biosynthesis</keyword>
<keyword id="KW-0443">Lipid metabolism</keyword>
<keyword id="KW-0547">Nucleotide-binding</keyword>
<keyword id="KW-0594">Phospholipid biosynthesis</keyword>
<keyword id="KW-1208">Phospholipid metabolism</keyword>
<keyword id="KW-1185">Reference proteome</keyword>
<keyword id="KW-0808">Transferase</keyword>
<evidence type="ECO:0000250" key="1">
    <source>
        <dbReference type="UniProtKB" id="P76407"/>
    </source>
</evidence>
<evidence type="ECO:0000250" key="2">
    <source>
        <dbReference type="UniProtKB" id="Q2W8P4"/>
    </source>
</evidence>
<evidence type="ECO:0000255" key="3">
    <source>
        <dbReference type="PROSITE-ProRule" id="PRU00783"/>
    </source>
</evidence>
<evidence type="ECO:0000269" key="4">
    <source>
    </source>
</evidence>
<evidence type="ECO:0000269" key="5">
    <source>
    </source>
</evidence>
<evidence type="ECO:0000269" key="6">
    <source>
    </source>
</evidence>
<evidence type="ECO:0000303" key="7">
    <source>
    </source>
</evidence>
<evidence type="ECO:0000305" key="8"/>
<evidence type="ECO:0000305" key="9">
    <source>
    </source>
</evidence>
<proteinExistence type="inferred from homology"/>
<dbReference type="EC" id="2.7.-.-" evidence="3"/>
<dbReference type="EMBL" id="BX571797">
    <property type="protein sequence ID" value="CAE12046.1"/>
    <property type="molecule type" value="Genomic_DNA"/>
</dbReference>
<dbReference type="EMBL" id="HG794546">
    <property type="protein sequence ID" value="CDK99580.1"/>
    <property type="status" value="ALT_INIT"/>
    <property type="molecule type" value="Genomic_DNA"/>
</dbReference>
<dbReference type="SMR" id="Q6NE47"/>
<dbReference type="STRING" id="1430440.MGMSRv2__2365"/>
<dbReference type="KEGG" id="mgy:MGMSRv2__2365"/>
<dbReference type="eggNOG" id="COG1597">
    <property type="taxonomic scope" value="Bacteria"/>
</dbReference>
<dbReference type="HOGENOM" id="CLU_045532_1_3_5"/>
<dbReference type="Proteomes" id="UP000018922">
    <property type="component" value="Chromosome I"/>
</dbReference>
<dbReference type="GO" id="GO:0005737">
    <property type="term" value="C:cytoplasm"/>
    <property type="evidence" value="ECO:0000250"/>
    <property type="project" value="UniProtKB"/>
</dbReference>
<dbReference type="GO" id="GO:0005524">
    <property type="term" value="F:ATP binding"/>
    <property type="evidence" value="ECO:0007669"/>
    <property type="project" value="UniProtKB-KW"/>
</dbReference>
<dbReference type="GO" id="GO:0016301">
    <property type="term" value="F:kinase activity"/>
    <property type="evidence" value="ECO:0007669"/>
    <property type="project" value="UniProtKB-KW"/>
</dbReference>
<dbReference type="GO" id="GO:0008654">
    <property type="term" value="P:phospholipid biosynthetic process"/>
    <property type="evidence" value="ECO:0007669"/>
    <property type="project" value="UniProtKB-KW"/>
</dbReference>
<dbReference type="Gene3D" id="2.60.200.40">
    <property type="match status" value="1"/>
</dbReference>
<dbReference type="Gene3D" id="3.40.50.10330">
    <property type="entry name" value="Probable inorganic polyphosphate/atp-NAD kinase, domain 1"/>
    <property type="match status" value="1"/>
</dbReference>
<dbReference type="InterPro" id="IPR017438">
    <property type="entry name" value="ATP-NAD_kinase_N"/>
</dbReference>
<dbReference type="InterPro" id="IPR001206">
    <property type="entry name" value="Diacylglycerol_kinase_cat_dom"/>
</dbReference>
<dbReference type="InterPro" id="IPR016064">
    <property type="entry name" value="NAD/diacylglycerol_kinase_sf"/>
</dbReference>
<dbReference type="NCBIfam" id="NF040993">
    <property type="entry name" value="MamU"/>
    <property type="match status" value="1"/>
</dbReference>
<dbReference type="Pfam" id="PF00781">
    <property type="entry name" value="DAGK_cat"/>
    <property type="match status" value="1"/>
</dbReference>
<dbReference type="SUPFAM" id="SSF111331">
    <property type="entry name" value="NAD kinase/diacylglycerol kinase-like"/>
    <property type="match status" value="1"/>
</dbReference>
<dbReference type="PROSITE" id="PS50146">
    <property type="entry name" value="DAGK"/>
    <property type="match status" value="1"/>
</dbReference>